<protein>
    <recommendedName>
        <fullName>Adropin</fullName>
    </recommendedName>
    <alternativeName>
        <fullName>Energy homeostasis-associated protein</fullName>
    </alternativeName>
</protein>
<proteinExistence type="evidence at protein level"/>
<feature type="signal peptide" evidence="2">
    <location>
        <begin position="1"/>
        <end position="33"/>
    </location>
</feature>
<feature type="chain" id="PRO_0000292879" description="Adropin">
    <location>
        <begin position="34"/>
        <end position="76"/>
    </location>
</feature>
<feature type="region of interest" description="Disordered" evidence="3">
    <location>
        <begin position="41"/>
        <end position="76"/>
    </location>
</feature>
<feature type="compositionally biased region" description="Pro residues" evidence="3">
    <location>
        <begin position="52"/>
        <end position="65"/>
    </location>
</feature>
<feature type="splice variant" id="VSP_026454" description="In isoform 2." evidence="5">
    <original>SPNSSPGPCPEKAPPPQKPSHEGSYLLQP</original>
    <variation>RTQESACLELDPAAQSLASLAPIGAQWP</variation>
    <location>
        <begin position="48"/>
        <end position="76"/>
    </location>
</feature>
<organism>
    <name type="scientific">Homo sapiens</name>
    <name type="common">Human</name>
    <dbReference type="NCBI Taxonomy" id="9606"/>
    <lineage>
        <taxon>Eukaryota</taxon>
        <taxon>Metazoa</taxon>
        <taxon>Chordata</taxon>
        <taxon>Craniata</taxon>
        <taxon>Vertebrata</taxon>
        <taxon>Euteleostomi</taxon>
        <taxon>Mammalia</taxon>
        <taxon>Eutheria</taxon>
        <taxon>Euarchontoglires</taxon>
        <taxon>Primates</taxon>
        <taxon>Haplorrhini</taxon>
        <taxon>Catarrhini</taxon>
        <taxon>Hominidae</taxon>
        <taxon>Homo</taxon>
    </lineage>
</organism>
<keyword id="KW-0025">Alternative splicing</keyword>
<keyword id="KW-1267">Proteomics identification</keyword>
<keyword id="KW-1185">Reference proteome</keyword>
<keyword id="KW-0964">Secreted</keyword>
<keyword id="KW-0732">Signal</keyword>
<sequence>MGAAISQGALIAIVCNGLVGFLLLLLWVILCWACHSRSADVDSLSESSPNSSPGPCPEKAPPPQKPSHEGSYLLQP</sequence>
<name>ENHO_HUMAN</name>
<evidence type="ECO:0000250" key="1"/>
<evidence type="ECO:0000255" key="2"/>
<evidence type="ECO:0000256" key="3">
    <source>
        <dbReference type="SAM" id="MobiDB-lite"/>
    </source>
</evidence>
<evidence type="ECO:0000269" key="4">
    <source>
    </source>
</evidence>
<evidence type="ECO:0000303" key="5">
    <source>
    </source>
</evidence>
<evidence type="ECO:0000305" key="6"/>
<reference key="1">
    <citation type="journal article" date="2003" name="Genome Res.">
        <title>The secreted protein discovery initiative (SPDI), a large-scale effort to identify novel human secreted and transmembrane proteins: a bioinformatics assessment.</title>
        <authorList>
            <person name="Clark H.F."/>
            <person name="Gurney A.L."/>
            <person name="Abaya E."/>
            <person name="Baker K."/>
            <person name="Baldwin D.T."/>
            <person name="Brush J."/>
            <person name="Chen J."/>
            <person name="Chow B."/>
            <person name="Chui C."/>
            <person name="Crowley C."/>
            <person name="Currell B."/>
            <person name="Deuel B."/>
            <person name="Dowd P."/>
            <person name="Eaton D."/>
            <person name="Foster J.S."/>
            <person name="Grimaldi C."/>
            <person name="Gu Q."/>
            <person name="Hass P.E."/>
            <person name="Heldens S."/>
            <person name="Huang A."/>
            <person name="Kim H.S."/>
            <person name="Klimowski L."/>
            <person name="Jin Y."/>
            <person name="Johnson S."/>
            <person name="Lee J."/>
            <person name="Lewis L."/>
            <person name="Liao D."/>
            <person name="Mark M.R."/>
            <person name="Robbie E."/>
            <person name="Sanchez C."/>
            <person name="Schoenfeld J."/>
            <person name="Seshagiri S."/>
            <person name="Simmons L."/>
            <person name="Singh J."/>
            <person name="Smith V."/>
            <person name="Stinson J."/>
            <person name="Vagts A."/>
            <person name="Vandlen R.L."/>
            <person name="Watanabe C."/>
            <person name="Wieand D."/>
            <person name="Woods K."/>
            <person name="Xie M.-H."/>
            <person name="Yansura D.G."/>
            <person name="Yi S."/>
            <person name="Yu G."/>
            <person name="Yuan J."/>
            <person name="Zhang M."/>
            <person name="Zhang Z."/>
            <person name="Goddard A.D."/>
            <person name="Wood W.I."/>
            <person name="Godowski P.J."/>
            <person name="Gray A.M."/>
        </authorList>
    </citation>
    <scope>NUCLEOTIDE SEQUENCE [LARGE SCALE MRNA] (ISOFORM 1)</scope>
</reference>
<reference key="2">
    <citation type="journal article" date="2004" name="Genome Res.">
        <title>The status, quality, and expansion of the NIH full-length cDNA project: the Mammalian Gene Collection (MGC).</title>
        <authorList>
            <consortium name="The MGC Project Team"/>
        </authorList>
    </citation>
    <scope>NUCLEOTIDE SEQUENCE [LARGE SCALE MRNA] (ISOFORM 2)</scope>
    <source>
        <tissue>Skin</tissue>
    </source>
</reference>
<reference key="3">
    <citation type="journal article" date="2008" name="Cell Metab.">
        <title>Identification of adropin as a secreted factor linking dietary macronutrient intake with energy homeostasis and lipid metabolism.</title>
        <authorList>
            <person name="Kumar K.G."/>
            <person name="Trevaskis J.L."/>
            <person name="Lam D.D."/>
            <person name="Sutton G.M."/>
            <person name="Koza R.A."/>
            <person name="Chouljenko V.N."/>
            <person name="Kousoulas K.G."/>
            <person name="Rogers P.M."/>
            <person name="Kesterson R.A."/>
            <person name="Thearle M."/>
            <person name="Ferrante A.W. Jr."/>
            <person name="Mynatt R.L."/>
            <person name="Burris T.P."/>
            <person name="Dong J.Z."/>
            <person name="Halem H.A."/>
            <person name="Culler M.D."/>
            <person name="Heisler L.K."/>
            <person name="Stephens J.M."/>
            <person name="Butler A.A."/>
        </authorList>
    </citation>
    <scope>SUBCELLULAR LOCATION</scope>
    <scope>TISSUE SPECIFICITY</scope>
    <scope>INDUCTION</scope>
</reference>
<comment type="function">
    <text evidence="1">Involved in the regulation of glucose homeostasis and lipid metabolism.</text>
</comment>
<comment type="subcellular location">
    <subcellularLocation>
        <location evidence="4">Secreted</location>
    </subcellularLocation>
</comment>
<comment type="alternative products">
    <event type="alternative splicing"/>
    <isoform>
        <id>Q6UWT2-1</id>
        <name>1</name>
        <sequence type="displayed"/>
    </isoform>
    <isoform>
        <id>Q6UWT2-2</id>
        <name>2</name>
        <sequence type="described" ref="VSP_026454"/>
    </isoform>
</comment>
<comment type="tissue specificity">
    <text evidence="4">Expressed in liver and brain.</text>
</comment>
<comment type="sequence caution" evidence="6">
    <conflict type="frameshift">
        <sequence resource="EMBL-CDS" id="AAQ89021"/>
    </conflict>
</comment>
<accession>Q6UWT2</accession>
<accession>Q8N666</accession>
<dbReference type="EMBL" id="AY358658">
    <property type="protein sequence ID" value="AAQ89021.1"/>
    <property type="status" value="ALT_FRAME"/>
    <property type="molecule type" value="mRNA"/>
</dbReference>
<dbReference type="EMBL" id="BC022101">
    <property type="protein sequence ID" value="AAH22101.1"/>
    <property type="molecule type" value="mRNA"/>
</dbReference>
<dbReference type="CCDS" id="CCDS43795.1">
    <molecule id="Q6UWT2-1"/>
</dbReference>
<dbReference type="RefSeq" id="NP_940975.2">
    <molecule id="Q6UWT2-1"/>
    <property type="nucleotide sequence ID" value="NM_198573.3"/>
</dbReference>
<dbReference type="SMR" id="Q6UWT2"/>
<dbReference type="BioGRID" id="131993">
    <property type="interactions" value="1"/>
</dbReference>
<dbReference type="FunCoup" id="Q6UWT2">
    <property type="interactions" value="352"/>
</dbReference>
<dbReference type="STRING" id="9606.ENSP00000382675"/>
<dbReference type="iPTMnet" id="Q6UWT2"/>
<dbReference type="PhosphoSitePlus" id="Q6UWT2"/>
<dbReference type="BioMuta" id="ENHO"/>
<dbReference type="DMDM" id="150438882"/>
<dbReference type="PaxDb" id="9606-ENSP00000382675"/>
<dbReference type="PeptideAtlas" id="Q6UWT2"/>
<dbReference type="Antibodypedia" id="25484">
    <property type="antibodies" value="116 antibodies from 20 providers"/>
</dbReference>
<dbReference type="DNASU" id="375704"/>
<dbReference type="Ensembl" id="ENST00000399775.3">
    <molecule id="Q6UWT2-1"/>
    <property type="protein sequence ID" value="ENSP00000382675.2"/>
    <property type="gene ID" value="ENSG00000168913.7"/>
</dbReference>
<dbReference type="GeneID" id="375704"/>
<dbReference type="KEGG" id="hsa:375704"/>
<dbReference type="MANE-Select" id="ENST00000399775.3">
    <property type="protein sequence ID" value="ENSP00000382675.2"/>
    <property type="RefSeq nucleotide sequence ID" value="NM_198573.3"/>
    <property type="RefSeq protein sequence ID" value="NP_940975.2"/>
</dbReference>
<dbReference type="UCSC" id="uc003zun.2">
    <molecule id="Q6UWT2-1"/>
    <property type="organism name" value="human"/>
</dbReference>
<dbReference type="AGR" id="HGNC:24838"/>
<dbReference type="CTD" id="375704"/>
<dbReference type="DisGeNET" id="375704"/>
<dbReference type="GeneCards" id="ENHO"/>
<dbReference type="HGNC" id="HGNC:24838">
    <property type="gene designation" value="ENHO"/>
</dbReference>
<dbReference type="HPA" id="ENSG00000168913">
    <property type="expression patterns" value="Tissue enriched (brain)"/>
</dbReference>
<dbReference type="MIM" id="618556">
    <property type="type" value="gene"/>
</dbReference>
<dbReference type="neXtProt" id="NX_Q6UWT2"/>
<dbReference type="OpenTargets" id="ENSG00000168913"/>
<dbReference type="PharmGKB" id="PA164719156"/>
<dbReference type="VEuPathDB" id="HostDB:ENSG00000168913"/>
<dbReference type="eggNOG" id="ENOG502TDVU">
    <property type="taxonomic scope" value="Eukaryota"/>
</dbReference>
<dbReference type="GeneTree" id="ENSGT00390000001413"/>
<dbReference type="HOGENOM" id="CLU_197690_0_0_1"/>
<dbReference type="InParanoid" id="Q6UWT2"/>
<dbReference type="OMA" id="QKSSHEG"/>
<dbReference type="PAN-GO" id="Q6UWT2">
    <property type="GO annotations" value="2 GO annotations based on evolutionary models"/>
</dbReference>
<dbReference type="PhylomeDB" id="Q6UWT2"/>
<dbReference type="TreeFam" id="TF338522"/>
<dbReference type="PathwayCommons" id="Q6UWT2"/>
<dbReference type="BioGRID-ORCS" id="375704">
    <property type="hits" value="14 hits in 1139 CRISPR screens"/>
</dbReference>
<dbReference type="ChiTaRS" id="ENHO">
    <property type="organism name" value="human"/>
</dbReference>
<dbReference type="GenomeRNAi" id="375704"/>
<dbReference type="Pharos" id="Q6UWT2">
    <property type="development level" value="Tbio"/>
</dbReference>
<dbReference type="PRO" id="PR:Q6UWT2"/>
<dbReference type="Proteomes" id="UP000005640">
    <property type="component" value="Chromosome 9"/>
</dbReference>
<dbReference type="RNAct" id="Q6UWT2">
    <property type="molecule type" value="protein"/>
</dbReference>
<dbReference type="Bgee" id="ENSG00000168913">
    <property type="expression patterns" value="Expressed in amygdala and 136 other cell types or tissues"/>
</dbReference>
<dbReference type="GO" id="GO:0005576">
    <property type="term" value="C:extracellular region"/>
    <property type="evidence" value="ECO:0007669"/>
    <property type="project" value="UniProtKB-SubCell"/>
</dbReference>
<dbReference type="GO" id="GO:0005886">
    <property type="term" value="C:plasma membrane"/>
    <property type="evidence" value="ECO:0000318"/>
    <property type="project" value="GO_Central"/>
</dbReference>
<dbReference type="GO" id="GO:0005179">
    <property type="term" value="F:hormone activity"/>
    <property type="evidence" value="ECO:0007669"/>
    <property type="project" value="Ensembl"/>
</dbReference>
<dbReference type="GO" id="GO:0045747">
    <property type="term" value="P:positive regulation of Notch signaling pathway"/>
    <property type="evidence" value="ECO:0000318"/>
    <property type="project" value="GO_Central"/>
</dbReference>
<dbReference type="InterPro" id="IPR034461">
    <property type="entry name" value="Adropin"/>
</dbReference>
<dbReference type="PANTHER" id="PTHR38492">
    <property type="entry name" value="ADROPIN"/>
    <property type="match status" value="1"/>
</dbReference>
<dbReference type="PANTHER" id="PTHR38492:SF1">
    <property type="entry name" value="ADROPIN"/>
    <property type="match status" value="1"/>
</dbReference>
<gene>
    <name type="primary">ENHO</name>
    <name type="synonym">C9orf165</name>
    <name type="ORF">UNQ470/PRO830</name>
</gene>